<sequence>MPTINQLVRKPRQSKIKKSDSPALNKGFNSKKKKFTDLNSPQKRGVCTRVGTMTPKKPNSALRKYARVRLSNNIEINAYIPGIGHNLQEHSVVLVRGGRVKDLPGVRYHIVRGALDTSGVDGRRQGRSLYGTKKPKN</sequence>
<reference key="1">
    <citation type="journal article" date="2007" name="BMC Microbiol.">
        <title>Subtle genetic changes enhance virulence of methicillin resistant and sensitive Staphylococcus aureus.</title>
        <authorList>
            <person name="Highlander S.K."/>
            <person name="Hulten K.G."/>
            <person name="Qin X."/>
            <person name="Jiang H."/>
            <person name="Yerrapragada S."/>
            <person name="Mason E.O. Jr."/>
            <person name="Shang Y."/>
            <person name="Williams T.M."/>
            <person name="Fortunov R.M."/>
            <person name="Liu Y."/>
            <person name="Igboeli O."/>
            <person name="Petrosino J."/>
            <person name="Tirumalai M."/>
            <person name="Uzman A."/>
            <person name="Fox G.E."/>
            <person name="Cardenas A.M."/>
            <person name="Muzny D.M."/>
            <person name="Hemphill L."/>
            <person name="Ding Y."/>
            <person name="Dugan S."/>
            <person name="Blyth P.R."/>
            <person name="Buhay C.J."/>
            <person name="Dinh H.H."/>
            <person name="Hawes A.C."/>
            <person name="Holder M."/>
            <person name="Kovar C.L."/>
            <person name="Lee S.L."/>
            <person name="Liu W."/>
            <person name="Nazareth L.V."/>
            <person name="Wang Q."/>
            <person name="Zhou J."/>
            <person name="Kaplan S.L."/>
            <person name="Weinstock G.M."/>
        </authorList>
    </citation>
    <scope>NUCLEOTIDE SEQUENCE [LARGE SCALE GENOMIC DNA]</scope>
    <source>
        <strain>USA300 / TCH1516</strain>
    </source>
</reference>
<keyword id="KW-0488">Methylation</keyword>
<keyword id="KW-0687">Ribonucleoprotein</keyword>
<keyword id="KW-0689">Ribosomal protein</keyword>
<keyword id="KW-0694">RNA-binding</keyword>
<keyword id="KW-0699">rRNA-binding</keyword>
<keyword id="KW-0820">tRNA-binding</keyword>
<accession>A8YZP3</accession>
<name>RS12_STAAT</name>
<evidence type="ECO:0000250" key="1"/>
<evidence type="ECO:0000255" key="2">
    <source>
        <dbReference type="HAMAP-Rule" id="MF_00403"/>
    </source>
</evidence>
<evidence type="ECO:0000256" key="3">
    <source>
        <dbReference type="SAM" id="MobiDB-lite"/>
    </source>
</evidence>
<evidence type="ECO:0000305" key="4"/>
<proteinExistence type="inferred from homology"/>
<organism>
    <name type="scientific">Staphylococcus aureus (strain USA300 / TCH1516)</name>
    <dbReference type="NCBI Taxonomy" id="451516"/>
    <lineage>
        <taxon>Bacteria</taxon>
        <taxon>Bacillati</taxon>
        <taxon>Bacillota</taxon>
        <taxon>Bacilli</taxon>
        <taxon>Bacillales</taxon>
        <taxon>Staphylococcaceae</taxon>
        <taxon>Staphylococcus</taxon>
    </lineage>
</organism>
<dbReference type="EMBL" id="CP000730">
    <property type="protein sequence ID" value="ABX28565.1"/>
    <property type="molecule type" value="Genomic_DNA"/>
</dbReference>
<dbReference type="RefSeq" id="WP_001142337.1">
    <property type="nucleotide sequence ID" value="NC_010079.1"/>
</dbReference>
<dbReference type="SMR" id="A8YZP3"/>
<dbReference type="GeneID" id="98344879"/>
<dbReference type="KEGG" id="sax:USA300HOU_0539"/>
<dbReference type="HOGENOM" id="CLU_104295_1_2_9"/>
<dbReference type="GO" id="GO:0015935">
    <property type="term" value="C:small ribosomal subunit"/>
    <property type="evidence" value="ECO:0007669"/>
    <property type="project" value="InterPro"/>
</dbReference>
<dbReference type="GO" id="GO:0019843">
    <property type="term" value="F:rRNA binding"/>
    <property type="evidence" value="ECO:0007669"/>
    <property type="project" value="UniProtKB-UniRule"/>
</dbReference>
<dbReference type="GO" id="GO:0003735">
    <property type="term" value="F:structural constituent of ribosome"/>
    <property type="evidence" value="ECO:0007669"/>
    <property type="project" value="InterPro"/>
</dbReference>
<dbReference type="GO" id="GO:0000049">
    <property type="term" value="F:tRNA binding"/>
    <property type="evidence" value="ECO:0007669"/>
    <property type="project" value="UniProtKB-UniRule"/>
</dbReference>
<dbReference type="GO" id="GO:0006412">
    <property type="term" value="P:translation"/>
    <property type="evidence" value="ECO:0007669"/>
    <property type="project" value="UniProtKB-UniRule"/>
</dbReference>
<dbReference type="CDD" id="cd03368">
    <property type="entry name" value="Ribosomal_S12"/>
    <property type="match status" value="1"/>
</dbReference>
<dbReference type="FunFam" id="2.40.50.140:FF:000001">
    <property type="entry name" value="30S ribosomal protein S12"/>
    <property type="match status" value="1"/>
</dbReference>
<dbReference type="Gene3D" id="2.40.50.140">
    <property type="entry name" value="Nucleic acid-binding proteins"/>
    <property type="match status" value="1"/>
</dbReference>
<dbReference type="HAMAP" id="MF_00403_B">
    <property type="entry name" value="Ribosomal_uS12_B"/>
    <property type="match status" value="1"/>
</dbReference>
<dbReference type="InterPro" id="IPR012340">
    <property type="entry name" value="NA-bd_OB-fold"/>
</dbReference>
<dbReference type="InterPro" id="IPR006032">
    <property type="entry name" value="Ribosomal_uS12"/>
</dbReference>
<dbReference type="InterPro" id="IPR005679">
    <property type="entry name" value="Ribosomal_uS12_bac"/>
</dbReference>
<dbReference type="NCBIfam" id="TIGR00981">
    <property type="entry name" value="rpsL_bact"/>
    <property type="match status" value="1"/>
</dbReference>
<dbReference type="PANTHER" id="PTHR11652">
    <property type="entry name" value="30S RIBOSOMAL PROTEIN S12 FAMILY MEMBER"/>
    <property type="match status" value="1"/>
</dbReference>
<dbReference type="Pfam" id="PF00164">
    <property type="entry name" value="Ribosom_S12_S23"/>
    <property type="match status" value="1"/>
</dbReference>
<dbReference type="PIRSF" id="PIRSF002133">
    <property type="entry name" value="Ribosomal_S12/S23"/>
    <property type="match status" value="1"/>
</dbReference>
<dbReference type="PRINTS" id="PR01034">
    <property type="entry name" value="RIBOSOMALS12"/>
</dbReference>
<dbReference type="SUPFAM" id="SSF50249">
    <property type="entry name" value="Nucleic acid-binding proteins"/>
    <property type="match status" value="1"/>
</dbReference>
<dbReference type="PROSITE" id="PS00055">
    <property type="entry name" value="RIBOSOMAL_S12"/>
    <property type="match status" value="1"/>
</dbReference>
<gene>
    <name evidence="2" type="primary">rpsL</name>
    <name type="ordered locus">USA300HOU_0539</name>
</gene>
<protein>
    <recommendedName>
        <fullName evidence="2">Small ribosomal subunit protein uS12</fullName>
    </recommendedName>
    <alternativeName>
        <fullName evidence="4">30S ribosomal protein S12</fullName>
    </alternativeName>
</protein>
<comment type="function">
    <text evidence="2">With S4 and S5 plays an important role in translational accuracy.</text>
</comment>
<comment type="function">
    <text evidence="2">Interacts with and stabilizes bases of the 16S rRNA that are involved in tRNA selection in the A site and with the mRNA backbone. Located at the interface of the 30S and 50S subunits, it traverses the body of the 30S subunit contacting proteins on the other side and probably holding the rRNA structure together. The combined cluster of proteins S8, S12 and S17 appears to hold together the shoulder and platform of the 30S subunit.</text>
</comment>
<comment type="subunit">
    <text evidence="2">Part of the 30S ribosomal subunit. Contacts proteins S8 and S17. May interact with IF1 in the 30S initiation complex.</text>
</comment>
<comment type="similarity">
    <text evidence="2">Belongs to the universal ribosomal protein uS12 family.</text>
</comment>
<feature type="chain" id="PRO_1000080421" description="Small ribosomal subunit protein uS12">
    <location>
        <begin position="1"/>
        <end position="137"/>
    </location>
</feature>
<feature type="region of interest" description="Disordered" evidence="3">
    <location>
        <begin position="1"/>
        <end position="55"/>
    </location>
</feature>
<feature type="region of interest" description="Disordered" evidence="3">
    <location>
        <begin position="118"/>
        <end position="137"/>
    </location>
</feature>
<feature type="modified residue" description="3-methylthioaspartic acid" evidence="1">
    <location>
        <position position="102"/>
    </location>
</feature>